<protein>
    <recommendedName>
        <fullName evidence="2">NADP-dependent 3-hydroxy acid dehydrogenase YdfG</fullName>
    </recommendedName>
    <alternativeName>
        <fullName evidence="2">L-allo-threonine dehydrogenase</fullName>
        <ecNumber evidence="2">1.1.1.381</ecNumber>
    </alternativeName>
    <alternativeName>
        <fullName evidence="2">Malonic semialdehyde reductase</fullName>
        <ecNumber evidence="2">1.1.1.298</ecNumber>
    </alternativeName>
</protein>
<evidence type="ECO:0000250" key="1"/>
<evidence type="ECO:0000250" key="2">
    <source>
        <dbReference type="UniProtKB" id="P39831"/>
    </source>
</evidence>
<evidence type="ECO:0000250" key="3">
    <source>
        <dbReference type="UniProtKB" id="Q05016"/>
    </source>
</evidence>
<evidence type="ECO:0000255" key="4">
    <source>
        <dbReference type="PROSITE-ProRule" id="PRU10001"/>
    </source>
</evidence>
<evidence type="ECO:0000305" key="5"/>
<dbReference type="EC" id="1.1.1.381" evidence="2"/>
<dbReference type="EC" id="1.1.1.298" evidence="2"/>
<dbReference type="EMBL" id="AE006468">
    <property type="protein sequence ID" value="AAL20430.1"/>
    <property type="molecule type" value="Genomic_DNA"/>
</dbReference>
<dbReference type="EMBL" id="M84575">
    <property type="status" value="NOT_ANNOTATED_CDS"/>
    <property type="molecule type" value="Genomic_DNA"/>
</dbReference>
<dbReference type="RefSeq" id="NP_460471.1">
    <property type="nucleotide sequence ID" value="NC_003197.2"/>
</dbReference>
<dbReference type="RefSeq" id="WP_000636564.1">
    <property type="nucleotide sequence ID" value="NC_003197.2"/>
</dbReference>
<dbReference type="SMR" id="P69936"/>
<dbReference type="STRING" id="99287.STM1511"/>
<dbReference type="PaxDb" id="99287-STM1511"/>
<dbReference type="GeneID" id="1253029"/>
<dbReference type="KEGG" id="stm:STM1511"/>
<dbReference type="PATRIC" id="fig|99287.12.peg.1598"/>
<dbReference type="HOGENOM" id="CLU_010194_2_10_6"/>
<dbReference type="PhylomeDB" id="P69936"/>
<dbReference type="BioCyc" id="SENT99287:STM1511-MONOMER"/>
<dbReference type="Proteomes" id="UP000001014">
    <property type="component" value="Chromosome"/>
</dbReference>
<dbReference type="GO" id="GO:0005829">
    <property type="term" value="C:cytosol"/>
    <property type="evidence" value="ECO:0000318"/>
    <property type="project" value="GO_Central"/>
</dbReference>
<dbReference type="GO" id="GO:0035527">
    <property type="term" value="F:3-hydroxypropionate dehydrogenase (NADP+) activity"/>
    <property type="evidence" value="ECO:0007669"/>
    <property type="project" value="UniProtKB-EC"/>
</dbReference>
<dbReference type="CDD" id="cd05346">
    <property type="entry name" value="SDR_c5"/>
    <property type="match status" value="1"/>
</dbReference>
<dbReference type="FunFam" id="3.40.50.720:FF:000047">
    <property type="entry name" value="NADP-dependent L-serine/L-allo-threonine dehydrogenase"/>
    <property type="match status" value="1"/>
</dbReference>
<dbReference type="Gene3D" id="3.40.50.720">
    <property type="entry name" value="NAD(P)-binding Rossmann-like Domain"/>
    <property type="match status" value="1"/>
</dbReference>
<dbReference type="InterPro" id="IPR036291">
    <property type="entry name" value="NAD(P)-bd_dom_sf"/>
</dbReference>
<dbReference type="InterPro" id="IPR020904">
    <property type="entry name" value="Sc_DH/Rdtase_CS"/>
</dbReference>
<dbReference type="InterPro" id="IPR002347">
    <property type="entry name" value="SDR_fam"/>
</dbReference>
<dbReference type="NCBIfam" id="NF007829">
    <property type="entry name" value="PRK10538.1"/>
    <property type="match status" value="1"/>
</dbReference>
<dbReference type="PANTHER" id="PTHR43086:SF3">
    <property type="entry name" value="NADP-DEPENDENT 3-HYDROXY ACID DEHYDROGENASE YDFG"/>
    <property type="match status" value="1"/>
</dbReference>
<dbReference type="PANTHER" id="PTHR43086">
    <property type="entry name" value="VERY-LONG-CHAIN 3-OXOOACYL-COA REDUCTASE"/>
    <property type="match status" value="1"/>
</dbReference>
<dbReference type="Pfam" id="PF00106">
    <property type="entry name" value="adh_short"/>
    <property type="match status" value="1"/>
</dbReference>
<dbReference type="PRINTS" id="PR00081">
    <property type="entry name" value="GDHRDH"/>
</dbReference>
<dbReference type="PRINTS" id="PR00080">
    <property type="entry name" value="SDRFAMILY"/>
</dbReference>
<dbReference type="SUPFAM" id="SSF51735">
    <property type="entry name" value="NAD(P)-binding Rossmann-fold domains"/>
    <property type="match status" value="1"/>
</dbReference>
<dbReference type="PROSITE" id="PS00061">
    <property type="entry name" value="ADH_SHORT"/>
    <property type="match status" value="1"/>
</dbReference>
<comment type="function">
    <text evidence="2">NADP-dependent dehydrogenase with broad substrate specificity acting on 3-hydroxy acids. Catalyzes the NADP-dependent oxidation of L-allo-threonine to L-2-amino-3-keto-butyrate, which is spontaneously decarboxylated into aminoacetone. Also acts on D-threonine, L-serine, D-serine, D-3-hydroxyisobutyrate, L-3-hydroxyisobutyrate, D-glycerate and L-glycerate. Able to catalyze the reduction of the malonic semialdehyde to 3-hydroxypropionic acid. YdfG is apparently supplementing RutE, the presumed malonic semialdehyde reductase involved in pyrimidine degradation since both are able to detoxify malonic semialdehyde.</text>
</comment>
<comment type="catalytic activity">
    <reaction evidence="2">
        <text>3-hydroxypropanoate + NADP(+) = 3-oxopropanoate + NADPH + H(+)</text>
        <dbReference type="Rhea" id="RHEA:26438"/>
        <dbReference type="ChEBI" id="CHEBI:15378"/>
        <dbReference type="ChEBI" id="CHEBI:16510"/>
        <dbReference type="ChEBI" id="CHEBI:33190"/>
        <dbReference type="ChEBI" id="CHEBI:57783"/>
        <dbReference type="ChEBI" id="CHEBI:58349"/>
        <dbReference type="EC" id="1.1.1.298"/>
    </reaction>
</comment>
<comment type="catalytic activity">
    <reaction evidence="2">
        <text>L-allo-threonine + NADP(+) = aminoacetone + CO2 + NADPH</text>
        <dbReference type="Rhea" id="RHEA:43524"/>
        <dbReference type="ChEBI" id="CHEBI:16526"/>
        <dbReference type="ChEBI" id="CHEBI:57783"/>
        <dbReference type="ChEBI" id="CHEBI:58320"/>
        <dbReference type="ChEBI" id="CHEBI:58349"/>
        <dbReference type="ChEBI" id="CHEBI:58585"/>
        <dbReference type="EC" id="1.1.1.381"/>
    </reaction>
</comment>
<comment type="subunit">
    <text evidence="2">Homotetramer.</text>
</comment>
<comment type="similarity">
    <text evidence="5">Belongs to the short-chain dehydrogenases/reductases (SDR) family.</text>
</comment>
<organism>
    <name type="scientific">Salmonella typhimurium (strain LT2 / SGSC1412 / ATCC 700720)</name>
    <dbReference type="NCBI Taxonomy" id="99287"/>
    <lineage>
        <taxon>Bacteria</taxon>
        <taxon>Pseudomonadati</taxon>
        <taxon>Pseudomonadota</taxon>
        <taxon>Gammaproteobacteria</taxon>
        <taxon>Enterobacterales</taxon>
        <taxon>Enterobacteriaceae</taxon>
        <taxon>Salmonella</taxon>
    </lineage>
</organism>
<sequence length="248" mass="27043">MIVLVTGATAGFGECIARRFVENGHKVIATGRRHERLQALKDELGENVLTAQLDVRNRAAIEEMMASLPAQWRDIDVLVNNAGLALGLEPAHKASVEDWETMIDTNNKGLIYMTRAVLPGMVERNRGHIINIGSTAGSWPYAGGNVYGATKAFVRQFSLNLRTDLHGTAVRVTDIEPGLVGGTEFSSVRFKGDDEKAGKTYENTTALTPEDITEAVWWVATLPAHVNINTVEMMPVTQSFAGLSVHRS</sequence>
<name>YDFG_SALTY</name>
<reference key="1">
    <citation type="journal article" date="2001" name="Nature">
        <title>Complete genome sequence of Salmonella enterica serovar Typhimurium LT2.</title>
        <authorList>
            <person name="McClelland M."/>
            <person name="Sanderson K.E."/>
            <person name="Spieth J."/>
            <person name="Clifton S.W."/>
            <person name="Latreille P."/>
            <person name="Courtney L."/>
            <person name="Porwollik S."/>
            <person name="Ali J."/>
            <person name="Dante M."/>
            <person name="Du F."/>
            <person name="Hou S."/>
            <person name="Layman D."/>
            <person name="Leonard S."/>
            <person name="Nguyen C."/>
            <person name="Scott K."/>
            <person name="Holmes A."/>
            <person name="Grewal N."/>
            <person name="Mulvaney E."/>
            <person name="Ryan E."/>
            <person name="Sun H."/>
            <person name="Florea L."/>
            <person name="Miller W."/>
            <person name="Stoneking T."/>
            <person name="Nhan M."/>
            <person name="Waterston R."/>
            <person name="Wilson R.K."/>
        </authorList>
    </citation>
    <scope>NUCLEOTIDE SEQUENCE [LARGE SCALE GENOMIC DNA]</scope>
    <source>
        <strain>LT2 / SGSC1412 / ATCC 700720</strain>
    </source>
</reference>
<reference key="2">
    <citation type="journal article" date="1992" name="J. Bacteriol.">
        <title>Cloning and nucleotide sequence of the Salmonella typhimurium dcp gene encoding dipeptidyl carboxypeptidase.</title>
        <authorList>
            <person name="Miller C.G."/>
            <person name="Hamilton S."/>
        </authorList>
    </citation>
    <scope>NUCLEOTIDE SEQUENCE [GENOMIC DNA] OF 1-97</scope>
</reference>
<reference key="3">
    <citation type="journal article" date="1994" name="Nat. Genet.">
        <title>Large scale bacterial gene discovery by similarity search.</title>
        <authorList>
            <person name="Robison K."/>
            <person name="Gilbert W."/>
            <person name="Church G.M."/>
        </authorList>
    </citation>
    <scope>IDENTIFICATION</scope>
</reference>
<feature type="chain" id="PRO_0000054829" description="NADP-dependent 3-hydroxy acid dehydrogenase YdfG">
    <location>
        <begin position="1"/>
        <end position="248"/>
    </location>
</feature>
<feature type="active site" description="Proton acceptor" evidence="4">
    <location>
        <position position="147"/>
    </location>
</feature>
<feature type="binding site" evidence="3">
    <location>
        <begin position="7"/>
        <end position="12"/>
    </location>
    <ligand>
        <name>NADP(+)</name>
        <dbReference type="ChEBI" id="CHEBI:58349"/>
    </ligand>
</feature>
<feature type="binding site" evidence="3">
    <location>
        <begin position="32"/>
        <end position="33"/>
    </location>
    <ligand>
        <name>NADP(+)</name>
        <dbReference type="ChEBI" id="CHEBI:58349"/>
    </ligand>
</feature>
<feature type="binding site" evidence="3">
    <location>
        <begin position="54"/>
        <end position="55"/>
    </location>
    <ligand>
        <name>NADP(+)</name>
        <dbReference type="ChEBI" id="CHEBI:58349"/>
    </ligand>
</feature>
<feature type="binding site" evidence="3">
    <location>
        <position position="81"/>
    </location>
    <ligand>
        <name>NADP(+)</name>
        <dbReference type="ChEBI" id="CHEBI:58349"/>
    </ligand>
</feature>
<feature type="binding site" evidence="1">
    <location>
        <position position="134"/>
    </location>
    <ligand>
        <name>substrate</name>
    </ligand>
</feature>
<feature type="binding site" evidence="3">
    <location>
        <position position="147"/>
    </location>
    <ligand>
        <name>NADP(+)</name>
        <dbReference type="ChEBI" id="CHEBI:58349"/>
    </ligand>
</feature>
<feature type="binding site" evidence="3">
    <location>
        <position position="151"/>
    </location>
    <ligand>
        <name>NADP(+)</name>
        <dbReference type="ChEBI" id="CHEBI:58349"/>
    </ligand>
</feature>
<feature type="binding site" evidence="3">
    <location>
        <begin position="177"/>
        <end position="185"/>
    </location>
    <ligand>
        <name>NADP(+)</name>
        <dbReference type="ChEBI" id="CHEBI:58349"/>
    </ligand>
</feature>
<feature type="sequence conflict" description="In Ref. 2." evidence="5" ref="2">
    <original>RNRAAIEEMMASLPA</original>
    <variation>QPRGHRRDDGLSAS</variation>
    <location>
        <begin position="56"/>
        <end position="70"/>
    </location>
</feature>
<accession>P69936</accession>
<accession>P40864</accession>
<gene>
    <name evidence="2" type="primary">ydfG</name>
    <name type="ordered locus">STM1511</name>
</gene>
<keyword id="KW-0521">NADP</keyword>
<keyword id="KW-0560">Oxidoreductase</keyword>
<keyword id="KW-1185">Reference proteome</keyword>
<proteinExistence type="inferred from homology"/>